<reference key="1">
    <citation type="journal article" date="2008" name="PLoS ONE">
        <title>Genome sequence of the saprophyte Leptospira biflexa provides insights into the evolution of Leptospira and the pathogenesis of leptospirosis.</title>
        <authorList>
            <person name="Picardeau M."/>
            <person name="Bulach D.M."/>
            <person name="Bouchier C."/>
            <person name="Zuerner R.L."/>
            <person name="Zidane N."/>
            <person name="Wilson P.J."/>
            <person name="Creno S."/>
            <person name="Kuczek E.S."/>
            <person name="Bommezzadri S."/>
            <person name="Davis J.C."/>
            <person name="McGrath A."/>
            <person name="Johnson M.J."/>
            <person name="Boursaux-Eude C."/>
            <person name="Seemann T."/>
            <person name="Rouy Z."/>
            <person name="Coppel R.L."/>
            <person name="Rood J.I."/>
            <person name="Lajus A."/>
            <person name="Davies J.K."/>
            <person name="Medigue C."/>
            <person name="Adler B."/>
        </authorList>
    </citation>
    <scope>NUCLEOTIDE SEQUENCE [LARGE SCALE GENOMIC DNA]</scope>
    <source>
        <strain>Patoc 1 / ATCC 23582 / Paris</strain>
    </source>
</reference>
<dbReference type="EC" id="2.4.1.21" evidence="1"/>
<dbReference type="EMBL" id="CP000786">
    <property type="protein sequence ID" value="ABZ99057.1"/>
    <property type="molecule type" value="Genomic_DNA"/>
</dbReference>
<dbReference type="RefSeq" id="WP_012389915.1">
    <property type="nucleotide sequence ID" value="NC_010602.1"/>
</dbReference>
<dbReference type="SMR" id="B0SPF1"/>
<dbReference type="STRING" id="456481.LEPBI_I2990"/>
<dbReference type="CAZy" id="GT5">
    <property type="family name" value="Glycosyltransferase Family 5"/>
</dbReference>
<dbReference type="KEGG" id="lbi:LEPBI_I2990"/>
<dbReference type="HOGENOM" id="CLU_009583_18_2_12"/>
<dbReference type="OrthoDB" id="9808590at2"/>
<dbReference type="BioCyc" id="LBIF456481:LEPBI_RS14645-MONOMER"/>
<dbReference type="UniPathway" id="UPA00164"/>
<dbReference type="Proteomes" id="UP000001847">
    <property type="component" value="Chromosome I"/>
</dbReference>
<dbReference type="GO" id="GO:0009011">
    <property type="term" value="F:alpha-1,4-glucan glucosyltransferase (ADP-glucose donor) activity"/>
    <property type="evidence" value="ECO:0007669"/>
    <property type="project" value="UniProtKB-UniRule"/>
</dbReference>
<dbReference type="GO" id="GO:0004373">
    <property type="term" value="F:alpha-1,4-glucan glucosyltransferase (UDP-glucose donor) activity"/>
    <property type="evidence" value="ECO:0007669"/>
    <property type="project" value="InterPro"/>
</dbReference>
<dbReference type="GO" id="GO:0005978">
    <property type="term" value="P:glycogen biosynthetic process"/>
    <property type="evidence" value="ECO:0007669"/>
    <property type="project" value="UniProtKB-UniRule"/>
</dbReference>
<dbReference type="CDD" id="cd03791">
    <property type="entry name" value="GT5_Glycogen_synthase_DULL1-like"/>
    <property type="match status" value="1"/>
</dbReference>
<dbReference type="Gene3D" id="3.40.50.2000">
    <property type="entry name" value="Glycogen Phosphorylase B"/>
    <property type="match status" value="2"/>
</dbReference>
<dbReference type="HAMAP" id="MF_00484">
    <property type="entry name" value="Glycogen_synth"/>
    <property type="match status" value="1"/>
</dbReference>
<dbReference type="InterPro" id="IPR001296">
    <property type="entry name" value="Glyco_trans_1"/>
</dbReference>
<dbReference type="InterPro" id="IPR011835">
    <property type="entry name" value="GS/SS"/>
</dbReference>
<dbReference type="InterPro" id="IPR013534">
    <property type="entry name" value="Starch_synth_cat_dom"/>
</dbReference>
<dbReference type="NCBIfam" id="TIGR02095">
    <property type="entry name" value="glgA"/>
    <property type="match status" value="1"/>
</dbReference>
<dbReference type="PANTHER" id="PTHR45825:SF11">
    <property type="entry name" value="ALPHA AMYLASE DOMAIN-CONTAINING PROTEIN"/>
    <property type="match status" value="1"/>
</dbReference>
<dbReference type="PANTHER" id="PTHR45825">
    <property type="entry name" value="GRANULE-BOUND STARCH SYNTHASE 1, CHLOROPLASTIC/AMYLOPLASTIC"/>
    <property type="match status" value="1"/>
</dbReference>
<dbReference type="Pfam" id="PF08323">
    <property type="entry name" value="Glyco_transf_5"/>
    <property type="match status" value="1"/>
</dbReference>
<dbReference type="Pfam" id="PF00534">
    <property type="entry name" value="Glycos_transf_1"/>
    <property type="match status" value="1"/>
</dbReference>
<dbReference type="SUPFAM" id="SSF53756">
    <property type="entry name" value="UDP-Glycosyltransferase/glycogen phosphorylase"/>
    <property type="match status" value="1"/>
</dbReference>
<gene>
    <name evidence="1" type="primary">glgA</name>
    <name type="ordered locus">LEPBI_I2990</name>
</gene>
<proteinExistence type="inferred from homology"/>
<sequence length="476" mass="54553">MKILHASAEYFPYTKMGGLADMLASLTKEQSRTEEVYVALPLIGKLGKEPNWTGKEVGALLPQDAKEETIAVSLLAKARFREAIESGVKLYFFDSELFSGLNSIYGQADEHYRFAIFSYACYALSQILQVDVFHAHDWHTALSLTLQKNSTKPIPSLFTIHNLAYQGDHPFWMTGFLKEDPFYLITSPFDQDGKCNYMKAGILSAGQITTVSPGYREETLREPNGFGLSYVLKKRKADYTGILNGIDPDEWNPKVDKRIFQTYHLQNWKEGKRKNKEHLYREIGRPNVSLDLPLIGLIGRLTYQKGFPTFLQAFLERRHLPHRYVVLGSGDPETENAFFHLSDMMPDVFYFYKGYNESLAHQIEAASDFFLMPSLFEPCGLNQMYSHVYGTIPIVSRVGGLRDTVDESIDIQFKTGIVFEPNDKSSLGYALERANDLFVSPERDHVVKNMMNLDWTWTKRKLEYDRVYKIAIELLE</sequence>
<comment type="function">
    <text evidence="1">Synthesizes alpha-1,4-glucan chains using ADP-glucose.</text>
</comment>
<comment type="catalytic activity">
    <reaction evidence="1">
        <text>[(1-&gt;4)-alpha-D-glucosyl](n) + ADP-alpha-D-glucose = [(1-&gt;4)-alpha-D-glucosyl](n+1) + ADP + H(+)</text>
        <dbReference type="Rhea" id="RHEA:18189"/>
        <dbReference type="Rhea" id="RHEA-COMP:9584"/>
        <dbReference type="Rhea" id="RHEA-COMP:9587"/>
        <dbReference type="ChEBI" id="CHEBI:15378"/>
        <dbReference type="ChEBI" id="CHEBI:15444"/>
        <dbReference type="ChEBI" id="CHEBI:57498"/>
        <dbReference type="ChEBI" id="CHEBI:456216"/>
        <dbReference type="EC" id="2.4.1.21"/>
    </reaction>
</comment>
<comment type="pathway">
    <text evidence="1">Glycan biosynthesis; glycogen biosynthesis.</text>
</comment>
<comment type="similarity">
    <text evidence="1">Belongs to the glycosyltransferase 1 family. Bacterial/plant glycogen synthase subfamily.</text>
</comment>
<protein>
    <recommendedName>
        <fullName evidence="1">Glycogen synthase</fullName>
        <ecNumber evidence="1">2.4.1.21</ecNumber>
    </recommendedName>
    <alternativeName>
        <fullName evidence="1">Starch [bacterial glycogen] synthase</fullName>
    </alternativeName>
</protein>
<accession>B0SPF1</accession>
<keyword id="KW-0320">Glycogen biosynthesis</keyword>
<keyword id="KW-0328">Glycosyltransferase</keyword>
<keyword id="KW-1185">Reference proteome</keyword>
<keyword id="KW-0808">Transferase</keyword>
<organism>
    <name type="scientific">Leptospira biflexa serovar Patoc (strain Patoc 1 / ATCC 23582 / Paris)</name>
    <dbReference type="NCBI Taxonomy" id="456481"/>
    <lineage>
        <taxon>Bacteria</taxon>
        <taxon>Pseudomonadati</taxon>
        <taxon>Spirochaetota</taxon>
        <taxon>Spirochaetia</taxon>
        <taxon>Leptospirales</taxon>
        <taxon>Leptospiraceae</taxon>
        <taxon>Leptospira</taxon>
    </lineage>
</organism>
<name>GLGA_LEPBP</name>
<evidence type="ECO:0000255" key="1">
    <source>
        <dbReference type="HAMAP-Rule" id="MF_00484"/>
    </source>
</evidence>
<feature type="chain" id="PRO_1000126084" description="Glycogen synthase">
    <location>
        <begin position="1"/>
        <end position="476"/>
    </location>
</feature>
<feature type="binding site" evidence="1">
    <location>
        <position position="15"/>
    </location>
    <ligand>
        <name>ADP-alpha-D-glucose</name>
        <dbReference type="ChEBI" id="CHEBI:57498"/>
    </ligand>
</feature>